<sequence>MPFIPHTPDDIEKMLAVIGAESIDQLFDEIPSALANIQQVPPGLNEAGITRLMEKREPNKQLCFIGAGAYEHHIPAAVWEIATRGEFYTAYTPYQAEASQGSLQLIYEYQTMMAELMAMDVSNASLYDGASALAEAALMAVRIKRGKAQRILVPASVNPFYRKVLSSIVEQQKINVEIIPFDPTMGIVNSELLKAKNAEGAAAIIIPQPNFFGCLEAVDVLTDWAHANDLLVIASVNPTAMALLKPPGQWGQKGADIVCGEGQPLGVPLASGGPYFGFMCCKKDYVRQLPGRIVGRTVDKKGREGFTLTLQAREQHIRRSKATSNICTNQGLAVVAATIYLSLLGATGLREVALASHTQSRDLFQRLSAVKGVSPVFSSPIFHEFVVRLEKPVEEVLAAMAEQGIQAGFSLKNDYPKLGNGLLICVTDTKTDDDLMAYENALRSIQ</sequence>
<reference key="1">
    <citation type="journal article" date="2009" name="Infect. Immun.">
        <title>Comparative genomics reveal extensive transposon-mediated genomic plasticity and diversity among potential effector proteins within the genus Coxiella.</title>
        <authorList>
            <person name="Beare P.A."/>
            <person name="Unsworth N."/>
            <person name="Andoh M."/>
            <person name="Voth D.E."/>
            <person name="Omsland A."/>
            <person name="Gilk S.D."/>
            <person name="Williams K.P."/>
            <person name="Sobral B.W."/>
            <person name="Kupko J.J. III"/>
            <person name="Porcella S.F."/>
            <person name="Samuel J.E."/>
            <person name="Heinzen R.A."/>
        </authorList>
    </citation>
    <scope>NUCLEOTIDE SEQUENCE [LARGE SCALE GENOMIC DNA]</scope>
    <source>
        <strain>Dugway 5J108-111</strain>
    </source>
</reference>
<name>GCSPA_COXBN</name>
<gene>
    <name evidence="1" type="primary">gcvPA</name>
    <name type="ordered locus">CBUD_0291</name>
</gene>
<accession>A9KC19</accession>
<proteinExistence type="inferred from homology"/>
<evidence type="ECO:0000255" key="1">
    <source>
        <dbReference type="HAMAP-Rule" id="MF_00712"/>
    </source>
</evidence>
<feature type="chain" id="PRO_1000083219" description="Probable glycine dehydrogenase (decarboxylating) subunit 1">
    <location>
        <begin position="1"/>
        <end position="446"/>
    </location>
</feature>
<keyword id="KW-0560">Oxidoreductase</keyword>
<protein>
    <recommendedName>
        <fullName evidence="1">Probable glycine dehydrogenase (decarboxylating) subunit 1</fullName>
        <ecNumber evidence="1">1.4.4.2</ecNumber>
    </recommendedName>
    <alternativeName>
        <fullName evidence="1">Glycine cleavage system P-protein subunit 1</fullName>
    </alternativeName>
    <alternativeName>
        <fullName evidence="1">Glycine decarboxylase subunit 1</fullName>
    </alternativeName>
    <alternativeName>
        <fullName evidence="1">Glycine dehydrogenase (aminomethyl-transferring) subunit 1</fullName>
    </alternativeName>
</protein>
<comment type="function">
    <text evidence="1">The glycine cleavage system catalyzes the degradation of glycine. The P protein binds the alpha-amino group of glycine through its pyridoxal phosphate cofactor; CO(2) is released and the remaining methylamine moiety is then transferred to the lipoamide cofactor of the H protein.</text>
</comment>
<comment type="catalytic activity">
    <reaction evidence="1">
        <text>N(6)-[(R)-lipoyl]-L-lysyl-[glycine-cleavage complex H protein] + glycine + H(+) = N(6)-[(R)-S(8)-aminomethyldihydrolipoyl]-L-lysyl-[glycine-cleavage complex H protein] + CO2</text>
        <dbReference type="Rhea" id="RHEA:24304"/>
        <dbReference type="Rhea" id="RHEA-COMP:10494"/>
        <dbReference type="Rhea" id="RHEA-COMP:10495"/>
        <dbReference type="ChEBI" id="CHEBI:15378"/>
        <dbReference type="ChEBI" id="CHEBI:16526"/>
        <dbReference type="ChEBI" id="CHEBI:57305"/>
        <dbReference type="ChEBI" id="CHEBI:83099"/>
        <dbReference type="ChEBI" id="CHEBI:83143"/>
        <dbReference type="EC" id="1.4.4.2"/>
    </reaction>
</comment>
<comment type="subunit">
    <text evidence="1">The glycine cleavage system is composed of four proteins: P, T, L and H. In this organism, the P 'protein' is a heterodimer of two subunits.</text>
</comment>
<comment type="similarity">
    <text evidence="1">Belongs to the GcvP family. N-terminal subunit subfamily.</text>
</comment>
<organism>
    <name type="scientific">Coxiella burnetii (strain Dugway 5J108-111)</name>
    <dbReference type="NCBI Taxonomy" id="434922"/>
    <lineage>
        <taxon>Bacteria</taxon>
        <taxon>Pseudomonadati</taxon>
        <taxon>Pseudomonadota</taxon>
        <taxon>Gammaproteobacteria</taxon>
        <taxon>Legionellales</taxon>
        <taxon>Coxiellaceae</taxon>
        <taxon>Coxiella</taxon>
    </lineage>
</organism>
<dbReference type="EC" id="1.4.4.2" evidence="1"/>
<dbReference type="EMBL" id="CP000733">
    <property type="protein sequence ID" value="ABS77062.1"/>
    <property type="molecule type" value="Genomic_DNA"/>
</dbReference>
<dbReference type="RefSeq" id="WP_005770511.1">
    <property type="nucleotide sequence ID" value="NC_009727.1"/>
</dbReference>
<dbReference type="SMR" id="A9KC19"/>
<dbReference type="KEGG" id="cbd:CBUD_0291"/>
<dbReference type="HOGENOM" id="CLU_004620_0_2_6"/>
<dbReference type="Proteomes" id="UP000008555">
    <property type="component" value="Chromosome"/>
</dbReference>
<dbReference type="GO" id="GO:0004375">
    <property type="term" value="F:glycine dehydrogenase (decarboxylating) activity"/>
    <property type="evidence" value="ECO:0007669"/>
    <property type="project" value="UniProtKB-EC"/>
</dbReference>
<dbReference type="GO" id="GO:0019464">
    <property type="term" value="P:glycine decarboxylation via glycine cleavage system"/>
    <property type="evidence" value="ECO:0007669"/>
    <property type="project" value="UniProtKB-UniRule"/>
</dbReference>
<dbReference type="GO" id="GO:0009116">
    <property type="term" value="P:nucleoside metabolic process"/>
    <property type="evidence" value="ECO:0007669"/>
    <property type="project" value="InterPro"/>
</dbReference>
<dbReference type="CDD" id="cd00613">
    <property type="entry name" value="GDC-P"/>
    <property type="match status" value="1"/>
</dbReference>
<dbReference type="FunFam" id="3.40.640.10:FF:000113">
    <property type="entry name" value="Probable glycine dehydrogenase (decarboxylating) subunit 1"/>
    <property type="match status" value="1"/>
</dbReference>
<dbReference type="Gene3D" id="3.90.1150.10">
    <property type="entry name" value="Aspartate Aminotransferase, domain 1"/>
    <property type="match status" value="1"/>
</dbReference>
<dbReference type="Gene3D" id="3.40.640.10">
    <property type="entry name" value="Type I PLP-dependent aspartate aminotransferase-like (Major domain)"/>
    <property type="match status" value="1"/>
</dbReference>
<dbReference type="HAMAP" id="MF_00712">
    <property type="entry name" value="GcvPA"/>
    <property type="match status" value="1"/>
</dbReference>
<dbReference type="InterPro" id="IPR023010">
    <property type="entry name" value="GcvPA"/>
</dbReference>
<dbReference type="InterPro" id="IPR049315">
    <property type="entry name" value="GDC-P_N"/>
</dbReference>
<dbReference type="InterPro" id="IPR020581">
    <property type="entry name" value="GDC_P"/>
</dbReference>
<dbReference type="InterPro" id="IPR015424">
    <property type="entry name" value="PyrdxlP-dep_Trfase"/>
</dbReference>
<dbReference type="InterPro" id="IPR015421">
    <property type="entry name" value="PyrdxlP-dep_Trfase_major"/>
</dbReference>
<dbReference type="InterPro" id="IPR015422">
    <property type="entry name" value="PyrdxlP-dep_Trfase_small"/>
</dbReference>
<dbReference type="NCBIfam" id="NF001696">
    <property type="entry name" value="PRK00451.1"/>
    <property type="match status" value="1"/>
</dbReference>
<dbReference type="PANTHER" id="PTHR42806">
    <property type="entry name" value="GLYCINE CLEAVAGE SYSTEM P-PROTEIN"/>
    <property type="match status" value="1"/>
</dbReference>
<dbReference type="PANTHER" id="PTHR42806:SF1">
    <property type="entry name" value="GLYCINE DEHYDROGENASE (DECARBOXYLATING)"/>
    <property type="match status" value="1"/>
</dbReference>
<dbReference type="Pfam" id="PF02347">
    <property type="entry name" value="GDC-P"/>
    <property type="match status" value="1"/>
</dbReference>
<dbReference type="PIRSF" id="PIRSF006815">
    <property type="entry name" value="GcvPA"/>
    <property type="match status" value="1"/>
</dbReference>
<dbReference type="SUPFAM" id="SSF53383">
    <property type="entry name" value="PLP-dependent transferases"/>
    <property type="match status" value="1"/>
</dbReference>